<protein>
    <recommendedName>
        <fullName evidence="1">Pyridoxine/pyridoxamine 5'-phosphate oxidase</fullName>
        <ecNumber evidence="1">1.4.3.5</ecNumber>
    </recommendedName>
    <alternativeName>
        <fullName evidence="1">PNP/PMP oxidase</fullName>
        <shortName evidence="1">PNPOx</shortName>
    </alternativeName>
    <alternativeName>
        <fullName evidence="1">Pyridoxal 5'-phosphate synthase</fullName>
    </alternativeName>
</protein>
<evidence type="ECO:0000255" key="1">
    <source>
        <dbReference type="HAMAP-Rule" id="MF_01629"/>
    </source>
</evidence>
<name>PDXH_SHEHH</name>
<feature type="chain" id="PRO_0000335800" description="Pyridoxine/pyridoxamine 5'-phosphate oxidase">
    <location>
        <begin position="1"/>
        <end position="212"/>
    </location>
</feature>
<feature type="binding site" evidence="1">
    <location>
        <begin position="8"/>
        <end position="11"/>
    </location>
    <ligand>
        <name>substrate</name>
    </ligand>
</feature>
<feature type="binding site" evidence="1">
    <location>
        <begin position="61"/>
        <end position="66"/>
    </location>
    <ligand>
        <name>FMN</name>
        <dbReference type="ChEBI" id="CHEBI:58210"/>
    </ligand>
</feature>
<feature type="binding site" evidence="1">
    <location>
        <position position="66"/>
    </location>
    <ligand>
        <name>substrate</name>
    </ligand>
</feature>
<feature type="binding site" evidence="1">
    <location>
        <begin position="76"/>
        <end position="77"/>
    </location>
    <ligand>
        <name>FMN</name>
        <dbReference type="ChEBI" id="CHEBI:58210"/>
    </ligand>
</feature>
<feature type="binding site" evidence="1">
    <location>
        <position position="82"/>
    </location>
    <ligand>
        <name>FMN</name>
        <dbReference type="ChEBI" id="CHEBI:58210"/>
    </ligand>
</feature>
<feature type="binding site" evidence="1">
    <location>
        <position position="83"/>
    </location>
    <ligand>
        <name>FMN</name>
        <dbReference type="ChEBI" id="CHEBI:58210"/>
    </ligand>
</feature>
<feature type="binding site" evidence="1">
    <location>
        <position position="105"/>
    </location>
    <ligand>
        <name>FMN</name>
        <dbReference type="ChEBI" id="CHEBI:58210"/>
    </ligand>
</feature>
<feature type="binding site" evidence="1">
    <location>
        <position position="123"/>
    </location>
    <ligand>
        <name>substrate</name>
    </ligand>
</feature>
<feature type="binding site" evidence="1">
    <location>
        <position position="127"/>
    </location>
    <ligand>
        <name>substrate</name>
    </ligand>
</feature>
<feature type="binding site" evidence="1">
    <location>
        <position position="131"/>
    </location>
    <ligand>
        <name>substrate</name>
    </ligand>
</feature>
<feature type="binding site" evidence="1">
    <location>
        <begin position="140"/>
        <end position="141"/>
    </location>
    <ligand>
        <name>FMN</name>
        <dbReference type="ChEBI" id="CHEBI:58210"/>
    </ligand>
</feature>
<feature type="binding site" evidence="1">
    <location>
        <position position="185"/>
    </location>
    <ligand>
        <name>FMN</name>
        <dbReference type="ChEBI" id="CHEBI:58210"/>
    </ligand>
</feature>
<feature type="binding site" evidence="1">
    <location>
        <begin position="191"/>
        <end position="193"/>
    </location>
    <ligand>
        <name>substrate</name>
    </ligand>
</feature>
<feature type="binding site" evidence="1">
    <location>
        <position position="195"/>
    </location>
    <ligand>
        <name>FMN</name>
        <dbReference type="ChEBI" id="CHEBI:58210"/>
    </ligand>
</feature>
<gene>
    <name evidence="1" type="primary">pdxH</name>
    <name type="ordered locus">Shal_1806</name>
</gene>
<proteinExistence type="inferred from homology"/>
<dbReference type="EC" id="1.4.3.5" evidence="1"/>
<dbReference type="EMBL" id="CP000931">
    <property type="protein sequence ID" value="ABZ76371.1"/>
    <property type="molecule type" value="Genomic_DNA"/>
</dbReference>
<dbReference type="RefSeq" id="WP_012276904.1">
    <property type="nucleotide sequence ID" value="NC_010334.1"/>
</dbReference>
<dbReference type="SMR" id="B0TQX6"/>
<dbReference type="STRING" id="458817.Shal_1806"/>
<dbReference type="KEGG" id="shl:Shal_1806"/>
<dbReference type="eggNOG" id="COG0259">
    <property type="taxonomic scope" value="Bacteria"/>
</dbReference>
<dbReference type="HOGENOM" id="CLU_032263_2_2_6"/>
<dbReference type="OrthoDB" id="9780392at2"/>
<dbReference type="UniPathway" id="UPA01068">
    <property type="reaction ID" value="UER00304"/>
</dbReference>
<dbReference type="UniPathway" id="UPA01068">
    <property type="reaction ID" value="UER00305"/>
</dbReference>
<dbReference type="Proteomes" id="UP000001317">
    <property type="component" value="Chromosome"/>
</dbReference>
<dbReference type="GO" id="GO:0010181">
    <property type="term" value="F:FMN binding"/>
    <property type="evidence" value="ECO:0007669"/>
    <property type="project" value="UniProtKB-UniRule"/>
</dbReference>
<dbReference type="GO" id="GO:0004733">
    <property type="term" value="F:pyridoxamine phosphate oxidase activity"/>
    <property type="evidence" value="ECO:0007669"/>
    <property type="project" value="UniProtKB-UniRule"/>
</dbReference>
<dbReference type="GO" id="GO:0008615">
    <property type="term" value="P:pyridoxine biosynthetic process"/>
    <property type="evidence" value="ECO:0007669"/>
    <property type="project" value="UniProtKB-KW"/>
</dbReference>
<dbReference type="Gene3D" id="2.30.110.10">
    <property type="entry name" value="Electron Transport, Fmn-binding Protein, Chain A"/>
    <property type="match status" value="1"/>
</dbReference>
<dbReference type="HAMAP" id="MF_01629">
    <property type="entry name" value="PdxH"/>
    <property type="match status" value="1"/>
</dbReference>
<dbReference type="InterPro" id="IPR000659">
    <property type="entry name" value="Pyridox_Oxase"/>
</dbReference>
<dbReference type="InterPro" id="IPR019740">
    <property type="entry name" value="Pyridox_Oxase_CS"/>
</dbReference>
<dbReference type="InterPro" id="IPR011576">
    <property type="entry name" value="Pyridox_Oxase_N"/>
</dbReference>
<dbReference type="InterPro" id="IPR019576">
    <property type="entry name" value="Pyridoxamine_oxidase_dimer_C"/>
</dbReference>
<dbReference type="InterPro" id="IPR012349">
    <property type="entry name" value="Split_barrel_FMN-bd"/>
</dbReference>
<dbReference type="NCBIfam" id="TIGR00558">
    <property type="entry name" value="pdxH"/>
    <property type="match status" value="1"/>
</dbReference>
<dbReference type="NCBIfam" id="NF004231">
    <property type="entry name" value="PRK05679.1"/>
    <property type="match status" value="1"/>
</dbReference>
<dbReference type="PANTHER" id="PTHR10851:SF0">
    <property type="entry name" value="PYRIDOXINE-5'-PHOSPHATE OXIDASE"/>
    <property type="match status" value="1"/>
</dbReference>
<dbReference type="PANTHER" id="PTHR10851">
    <property type="entry name" value="PYRIDOXINE-5-PHOSPHATE OXIDASE"/>
    <property type="match status" value="1"/>
</dbReference>
<dbReference type="Pfam" id="PF10590">
    <property type="entry name" value="PNP_phzG_C"/>
    <property type="match status" value="1"/>
</dbReference>
<dbReference type="Pfam" id="PF01243">
    <property type="entry name" value="PNPOx_N"/>
    <property type="match status" value="1"/>
</dbReference>
<dbReference type="PIRSF" id="PIRSF000190">
    <property type="entry name" value="Pyd_amn-ph_oxd"/>
    <property type="match status" value="1"/>
</dbReference>
<dbReference type="SUPFAM" id="SSF50475">
    <property type="entry name" value="FMN-binding split barrel"/>
    <property type="match status" value="1"/>
</dbReference>
<dbReference type="PROSITE" id="PS01064">
    <property type="entry name" value="PYRIDOX_OXIDASE"/>
    <property type="match status" value="1"/>
</dbReference>
<accession>B0TQX6</accession>
<comment type="function">
    <text evidence="1">Catalyzes the oxidation of either pyridoxine 5'-phosphate (PNP) or pyridoxamine 5'-phosphate (PMP) into pyridoxal 5'-phosphate (PLP).</text>
</comment>
<comment type="catalytic activity">
    <reaction evidence="1">
        <text>pyridoxamine 5'-phosphate + O2 + H2O = pyridoxal 5'-phosphate + H2O2 + NH4(+)</text>
        <dbReference type="Rhea" id="RHEA:15817"/>
        <dbReference type="ChEBI" id="CHEBI:15377"/>
        <dbReference type="ChEBI" id="CHEBI:15379"/>
        <dbReference type="ChEBI" id="CHEBI:16240"/>
        <dbReference type="ChEBI" id="CHEBI:28938"/>
        <dbReference type="ChEBI" id="CHEBI:58451"/>
        <dbReference type="ChEBI" id="CHEBI:597326"/>
        <dbReference type="EC" id="1.4.3.5"/>
    </reaction>
</comment>
<comment type="catalytic activity">
    <reaction evidence="1">
        <text>pyridoxine 5'-phosphate + O2 = pyridoxal 5'-phosphate + H2O2</text>
        <dbReference type="Rhea" id="RHEA:15149"/>
        <dbReference type="ChEBI" id="CHEBI:15379"/>
        <dbReference type="ChEBI" id="CHEBI:16240"/>
        <dbReference type="ChEBI" id="CHEBI:58589"/>
        <dbReference type="ChEBI" id="CHEBI:597326"/>
        <dbReference type="EC" id="1.4.3.5"/>
    </reaction>
</comment>
<comment type="cofactor">
    <cofactor evidence="1">
        <name>FMN</name>
        <dbReference type="ChEBI" id="CHEBI:58210"/>
    </cofactor>
    <text evidence="1">Binds 1 FMN per subunit.</text>
</comment>
<comment type="pathway">
    <text evidence="1">Cofactor metabolism; pyridoxal 5'-phosphate salvage; pyridoxal 5'-phosphate from pyridoxamine 5'-phosphate: step 1/1.</text>
</comment>
<comment type="pathway">
    <text evidence="1">Cofactor metabolism; pyridoxal 5'-phosphate salvage; pyridoxal 5'-phosphate from pyridoxine 5'-phosphate: step 1/1.</text>
</comment>
<comment type="subunit">
    <text evidence="1">Homodimer.</text>
</comment>
<comment type="similarity">
    <text evidence="1">Belongs to the pyridoxamine 5'-phosphate oxidase family.</text>
</comment>
<keyword id="KW-0285">Flavoprotein</keyword>
<keyword id="KW-0288">FMN</keyword>
<keyword id="KW-0560">Oxidoreductase</keyword>
<keyword id="KW-0664">Pyridoxine biosynthesis</keyword>
<organism>
    <name type="scientific">Shewanella halifaxensis (strain HAW-EB4)</name>
    <dbReference type="NCBI Taxonomy" id="458817"/>
    <lineage>
        <taxon>Bacteria</taxon>
        <taxon>Pseudomonadati</taxon>
        <taxon>Pseudomonadota</taxon>
        <taxon>Gammaproteobacteria</taxon>
        <taxon>Alteromonadales</taxon>
        <taxon>Shewanellaceae</taxon>
        <taxon>Shewanella</taxon>
    </lineage>
</organism>
<reference key="1">
    <citation type="submission" date="2008-01" db="EMBL/GenBank/DDBJ databases">
        <title>Complete sequence of Shewanella halifaxensis HAW-EB4.</title>
        <authorList>
            <consortium name="US DOE Joint Genome Institute"/>
            <person name="Copeland A."/>
            <person name="Lucas S."/>
            <person name="Lapidus A."/>
            <person name="Glavina del Rio T."/>
            <person name="Dalin E."/>
            <person name="Tice H."/>
            <person name="Bruce D."/>
            <person name="Goodwin L."/>
            <person name="Pitluck S."/>
            <person name="Sims D."/>
            <person name="Brettin T."/>
            <person name="Detter J.C."/>
            <person name="Han C."/>
            <person name="Kuske C.R."/>
            <person name="Schmutz J."/>
            <person name="Larimer F."/>
            <person name="Land M."/>
            <person name="Hauser L."/>
            <person name="Kyrpides N."/>
            <person name="Kim E."/>
            <person name="Zhao J.-S."/>
            <person name="Richardson P."/>
        </authorList>
    </citation>
    <scope>NUCLEOTIDE SEQUENCE [LARGE SCALE GENOMIC DNA]</scope>
    <source>
        <strain>HAW-EB4</strain>
    </source>
</reference>
<sequence>MSELSDIRREYTLGELHSEDVPNDPMDLFNAWLEVVRDSQIQDPTAMSVATVDENGQPFQRIVLLKRFGDDGFVFFTNLESRKAQHIANNAQVSILFPWHSIDKQVAVTGIAEPLSKTEVLKYFMSRPKESQIAAWVSKQSSPISARKALETKFAEMKAKFSKGDVPLPKFWGGYLVRPKSIEFWQGGEHRLHDRFIYTKVGDDWVRSRLAP</sequence>